<accession>B8BVM7</accession>
<dbReference type="EMBL" id="CM000639">
    <property type="protein sequence ID" value="EED94962.1"/>
    <property type="molecule type" value="Genomic_DNA"/>
</dbReference>
<dbReference type="RefSeq" id="XP_002287519.1">
    <property type="nucleotide sequence ID" value="XM_002287483.1"/>
</dbReference>
<dbReference type="SMR" id="B8BVM7"/>
<dbReference type="FunCoup" id="B8BVM7">
    <property type="interactions" value="250"/>
</dbReference>
<dbReference type="STRING" id="35128.B8BVM7"/>
<dbReference type="PaxDb" id="35128-Thaps2892"/>
<dbReference type="EnsemblProtists" id="EED94962">
    <property type="protein sequence ID" value="EED94962"/>
    <property type="gene ID" value="THAPSDRAFT_2892"/>
</dbReference>
<dbReference type="GeneID" id="7450422"/>
<dbReference type="KEGG" id="tps:THAPSDRAFT_2892"/>
<dbReference type="eggNOG" id="KOG1071">
    <property type="taxonomic scope" value="Eukaryota"/>
</dbReference>
<dbReference type="InParanoid" id="B8BVM7"/>
<dbReference type="OMA" id="QEYMLDD"/>
<dbReference type="Proteomes" id="UP000001449">
    <property type="component" value="Chromosome 2"/>
</dbReference>
<dbReference type="GO" id="GO:0005739">
    <property type="term" value="C:mitochondrion"/>
    <property type="evidence" value="ECO:0007669"/>
    <property type="project" value="UniProtKB-SubCell"/>
</dbReference>
<dbReference type="GO" id="GO:0003746">
    <property type="term" value="F:translation elongation factor activity"/>
    <property type="evidence" value="ECO:0000318"/>
    <property type="project" value="GO_Central"/>
</dbReference>
<dbReference type="GO" id="GO:0006414">
    <property type="term" value="P:translational elongation"/>
    <property type="evidence" value="ECO:0000318"/>
    <property type="project" value="GO_Central"/>
</dbReference>
<dbReference type="CDD" id="cd14275">
    <property type="entry name" value="UBA_EF-Ts"/>
    <property type="match status" value="1"/>
</dbReference>
<dbReference type="FunFam" id="1.10.286.20:FF:000001">
    <property type="entry name" value="Elongation factor Ts"/>
    <property type="match status" value="1"/>
</dbReference>
<dbReference type="FunFam" id="1.10.8.10:FF:000001">
    <property type="entry name" value="Elongation factor Ts"/>
    <property type="match status" value="1"/>
</dbReference>
<dbReference type="FunFam" id="3.30.479.20:FF:000001">
    <property type="entry name" value="Elongation factor Ts"/>
    <property type="match status" value="1"/>
</dbReference>
<dbReference type="Gene3D" id="1.10.286.20">
    <property type="match status" value="1"/>
</dbReference>
<dbReference type="Gene3D" id="1.10.8.10">
    <property type="entry name" value="DNA helicase RuvA subunit, C-terminal domain"/>
    <property type="match status" value="1"/>
</dbReference>
<dbReference type="Gene3D" id="3.30.479.20">
    <property type="entry name" value="Elongation factor Ts, dimerisation domain"/>
    <property type="match status" value="2"/>
</dbReference>
<dbReference type="HAMAP" id="MF_00050">
    <property type="entry name" value="EF_Ts"/>
    <property type="match status" value="1"/>
</dbReference>
<dbReference type="InterPro" id="IPR036402">
    <property type="entry name" value="EF-Ts_dimer_sf"/>
</dbReference>
<dbReference type="InterPro" id="IPR001816">
    <property type="entry name" value="Transl_elong_EFTs/EF1B"/>
</dbReference>
<dbReference type="InterPro" id="IPR014039">
    <property type="entry name" value="Transl_elong_EFTs/EF1B_dimer"/>
</dbReference>
<dbReference type="InterPro" id="IPR018101">
    <property type="entry name" value="Transl_elong_Ts_CS"/>
</dbReference>
<dbReference type="InterPro" id="IPR009060">
    <property type="entry name" value="UBA-like_sf"/>
</dbReference>
<dbReference type="NCBIfam" id="TIGR00116">
    <property type="entry name" value="tsf"/>
    <property type="match status" value="1"/>
</dbReference>
<dbReference type="PANTHER" id="PTHR11741">
    <property type="entry name" value="ELONGATION FACTOR TS"/>
    <property type="match status" value="1"/>
</dbReference>
<dbReference type="PANTHER" id="PTHR11741:SF0">
    <property type="entry name" value="ELONGATION FACTOR TS, MITOCHONDRIAL"/>
    <property type="match status" value="1"/>
</dbReference>
<dbReference type="Pfam" id="PF00889">
    <property type="entry name" value="EF_TS"/>
    <property type="match status" value="1"/>
</dbReference>
<dbReference type="SUPFAM" id="SSF54713">
    <property type="entry name" value="Elongation factor Ts (EF-Ts), dimerisation domain"/>
    <property type="match status" value="2"/>
</dbReference>
<dbReference type="SUPFAM" id="SSF46934">
    <property type="entry name" value="UBA-like"/>
    <property type="match status" value="1"/>
</dbReference>
<dbReference type="PROSITE" id="PS01126">
    <property type="entry name" value="EF_TS_1"/>
    <property type="match status" value="1"/>
</dbReference>
<dbReference type="PROSITE" id="PS01127">
    <property type="entry name" value="EF_TS_2"/>
    <property type="match status" value="1"/>
</dbReference>
<comment type="function">
    <text evidence="1">Associates with the EF-Tu.GDP complex and induces the exchange of GDP to GTP. It remains bound to the aminoacyl-tRNA.EF-Tu.GTP complex up to the GTP hydrolysis stage on the ribosome.</text>
</comment>
<comment type="subcellular location">
    <subcellularLocation>
        <location evidence="1">Mitochondrion</location>
    </subcellularLocation>
</comment>
<comment type="miscellaneous">
    <text evidence="1">This protein may be expected to contain an N-terminal transit peptide but none has been predicted.</text>
</comment>
<comment type="similarity">
    <text evidence="1">Belongs to the EF-Ts family.</text>
</comment>
<evidence type="ECO:0000255" key="1">
    <source>
        <dbReference type="HAMAP-Rule" id="MF_03135"/>
    </source>
</evidence>
<evidence type="ECO:0000256" key="2">
    <source>
        <dbReference type="SAM" id="MobiDB-lite"/>
    </source>
</evidence>
<organism>
    <name type="scientific">Thalassiosira pseudonana</name>
    <name type="common">Marine diatom</name>
    <name type="synonym">Cyclotella nana</name>
    <dbReference type="NCBI Taxonomy" id="35128"/>
    <lineage>
        <taxon>Eukaryota</taxon>
        <taxon>Sar</taxon>
        <taxon>Stramenopiles</taxon>
        <taxon>Ochrophyta</taxon>
        <taxon>Bacillariophyta</taxon>
        <taxon>Coscinodiscophyceae</taxon>
        <taxon>Thalassiosirophycidae</taxon>
        <taxon>Thalassiosirales</taxon>
        <taxon>Thalassiosiraceae</taxon>
        <taxon>Thalassiosira</taxon>
    </lineage>
</organism>
<proteinExistence type="inferred from homology"/>
<protein>
    <recommendedName>
        <fullName>Elongation factor Ts 1, mitochondrial</fullName>
        <shortName evidence="1">EF-Ts 1</shortName>
        <shortName evidence="1">EF-TsMt 1</shortName>
    </recommendedName>
</protein>
<sequence>MKFTAACILLSATAASAFSPVARFTFSRPTTTSLHAEVTTALIKELREATGAGMMDCKKALTEFDGDIEAAADELRKKGLAKADKKASRIAAEGKIAVASAGGKTVLVEVNCETDFVAKDESFAKFADEAAAAAAAMDGDSVEALMAANGNALEDARAGLVSKIGENIQVRRVATRGSGATTTGAYVHMNRIGVLVEIEGGTEALCTDVAMHVAAMNPAYATQEDVPAADIEKERAFLTAQVEDSGKPADIVAKMVEGRLQKFLAENCLVSQTYVKTNDRTVAKLLEENGAKMIGFTRIAVGEGIEKKVDDFAAEVAAMAGGGKAAPAPKAEEPAAVAPAKADAEDSAEAHKLSVITYP</sequence>
<reference key="1">
    <citation type="journal article" date="2004" name="Science">
        <title>The genome of the diatom Thalassiosira pseudonana: ecology, evolution, and metabolism.</title>
        <authorList>
            <person name="Armbrust E.V."/>
            <person name="Berges J.A."/>
            <person name="Bowler C."/>
            <person name="Green B.R."/>
            <person name="Martinez D."/>
            <person name="Putnam N.H."/>
            <person name="Zhou S."/>
            <person name="Allen A.E."/>
            <person name="Apt K.E."/>
            <person name="Bechner M."/>
            <person name="Brzezinski M.A."/>
            <person name="Chaal B.K."/>
            <person name="Chiovitti A."/>
            <person name="Davis A.K."/>
            <person name="Demarest M.S."/>
            <person name="Detter J.C."/>
            <person name="Glavina T."/>
            <person name="Goodstein D."/>
            <person name="Hadi M.Z."/>
            <person name="Hellsten U."/>
            <person name="Hildebrand M."/>
            <person name="Jenkins B.D."/>
            <person name="Jurka J."/>
            <person name="Kapitonov V.V."/>
            <person name="Kroger N."/>
            <person name="Lau W.W."/>
            <person name="Lane T.W."/>
            <person name="Larimer F.W."/>
            <person name="Lippmeier J.C."/>
            <person name="Lucas S."/>
            <person name="Medina M."/>
            <person name="Montsant A."/>
            <person name="Obornik M."/>
            <person name="Parker M.S."/>
            <person name="Palenik B."/>
            <person name="Pazour G.J."/>
            <person name="Richardson P.M."/>
            <person name="Rynearson T.A."/>
            <person name="Saito M.A."/>
            <person name="Schwartz D.C."/>
            <person name="Thamatrakoln K."/>
            <person name="Valentin K."/>
            <person name="Vardi A."/>
            <person name="Wilkerson F.P."/>
            <person name="Rokhsar D.S."/>
        </authorList>
    </citation>
    <scope>NUCLEOTIDE SEQUENCE [LARGE SCALE GENOMIC DNA]</scope>
    <source>
        <strain>CCMP1335 / NEPCC58 / CCAP 1085/12</strain>
    </source>
</reference>
<reference key="2">
    <citation type="submission" date="2008-09" db="EMBL/GenBank/DDBJ databases">
        <authorList>
            <consortium name="Diatom Consortium"/>
            <person name="Grigoriev I."/>
            <person name="Grimwood J."/>
            <person name="Kuo A."/>
            <person name="Otillar R.P."/>
            <person name="Salamov A."/>
            <person name="Detter J.C."/>
            <person name="Schmutz J."/>
            <person name="Lindquist E."/>
            <person name="Shapiro H."/>
            <person name="Lucas S."/>
            <person name="Glavina del Rio T."/>
            <person name="Bruce D."/>
            <person name="Pitluck S."/>
            <person name="Rokhsar D."/>
            <person name="Armbrust V."/>
        </authorList>
    </citation>
    <scope>GENOME REANNOTATION</scope>
    <source>
        <strain>CCMP1335 / NEPCC58 / CCAP 1085/12</strain>
    </source>
</reference>
<keyword id="KW-0251">Elongation factor</keyword>
<keyword id="KW-0496">Mitochondrion</keyword>
<keyword id="KW-0648">Protein biosynthesis</keyword>
<keyword id="KW-1185">Reference proteome</keyword>
<feature type="chain" id="PRO_0000402341" description="Elongation factor Ts 1, mitochondrial">
    <location>
        <begin position="1"/>
        <end position="359"/>
    </location>
</feature>
<feature type="region of interest" description="Disordered" evidence="2">
    <location>
        <begin position="323"/>
        <end position="345"/>
    </location>
</feature>
<feature type="compositionally biased region" description="Low complexity" evidence="2">
    <location>
        <begin position="323"/>
        <end position="341"/>
    </location>
</feature>
<gene>
    <name type="ORF">THAPSDRAFT_2892</name>
</gene>
<name>EFTS1_THAPS</name>